<feature type="chain" id="PRO_0000285486" description="Zinc finger and SCAN domain-containing protein 12">
    <location>
        <begin position="1"/>
        <end position="604"/>
    </location>
</feature>
<feature type="domain" description="SCAN box" evidence="3">
    <location>
        <begin position="46"/>
        <end position="128"/>
    </location>
</feature>
<feature type="zinc finger region" description="C2H2-type 1" evidence="2">
    <location>
        <begin position="274"/>
        <end position="296"/>
    </location>
</feature>
<feature type="zinc finger region" description="C2H2-type 2" evidence="2">
    <location>
        <begin position="302"/>
        <end position="324"/>
    </location>
</feature>
<feature type="zinc finger region" description="C2H2-type 3" evidence="2">
    <location>
        <begin position="330"/>
        <end position="352"/>
    </location>
</feature>
<feature type="zinc finger region" description="C2H2-type 4" evidence="2">
    <location>
        <begin position="358"/>
        <end position="380"/>
    </location>
</feature>
<feature type="zinc finger region" description="C2H2-type 5" evidence="2">
    <location>
        <begin position="386"/>
        <end position="408"/>
    </location>
</feature>
<feature type="zinc finger region" description="C2H2-type 6" evidence="2">
    <location>
        <begin position="414"/>
        <end position="436"/>
    </location>
</feature>
<feature type="zinc finger region" description="C2H2-type 7" evidence="2">
    <location>
        <begin position="442"/>
        <end position="463"/>
    </location>
</feature>
<feature type="zinc finger region" description="C2H2-type 8" evidence="2">
    <location>
        <begin position="469"/>
        <end position="491"/>
    </location>
</feature>
<feature type="zinc finger region" description="C2H2-type 9" evidence="2">
    <location>
        <begin position="497"/>
        <end position="519"/>
    </location>
</feature>
<feature type="zinc finger region" description="C2H2-type 10" evidence="2">
    <location>
        <begin position="525"/>
        <end position="547"/>
    </location>
</feature>
<feature type="zinc finger region" description="C2H2-type 11; degenerate" evidence="2">
    <location>
        <begin position="553"/>
        <end position="578"/>
    </location>
</feature>
<feature type="region of interest" description="Disordered" evidence="4">
    <location>
        <begin position="155"/>
        <end position="175"/>
    </location>
</feature>
<feature type="region of interest" description="Disordered" evidence="4">
    <location>
        <begin position="201"/>
        <end position="264"/>
    </location>
</feature>
<feature type="compositionally biased region" description="Basic and acidic residues" evidence="4">
    <location>
        <begin position="213"/>
        <end position="231"/>
    </location>
</feature>
<feature type="cross-link" description="Glycyl lysine isopeptide (Lys-Gly) (interchain with G-Cter in SUMO2)" evidence="1">
    <location>
        <position position="20"/>
    </location>
</feature>
<feature type="cross-link" description="Glycyl lysine isopeptide (Lys-Gly) (interchain with G-Cter in SUMO2)" evidence="1">
    <location>
        <position position="25"/>
    </location>
</feature>
<feature type="cross-link" description="Glycyl lysine isopeptide (Lys-Gly) (interchain with G-Cter in SUMO2)" evidence="1">
    <location>
        <position position="196"/>
    </location>
</feature>
<name>ZSC12_PONPY</name>
<comment type="function">
    <text>May be involved in transcriptional regulation.</text>
</comment>
<comment type="subcellular location">
    <subcellularLocation>
        <location evidence="3">Nucleus</location>
    </subcellularLocation>
</comment>
<comment type="similarity">
    <text evidence="5">Belongs to the krueppel C2H2-type zinc-finger protein family.</text>
</comment>
<keyword id="KW-0238">DNA-binding</keyword>
<keyword id="KW-1017">Isopeptide bond</keyword>
<keyword id="KW-0479">Metal-binding</keyword>
<keyword id="KW-0539">Nucleus</keyword>
<keyword id="KW-0677">Repeat</keyword>
<keyword id="KW-0804">Transcription</keyword>
<keyword id="KW-0805">Transcription regulation</keyword>
<keyword id="KW-0832">Ubl conjugation</keyword>
<keyword id="KW-0862">Zinc</keyword>
<keyword id="KW-0863">Zinc-finger</keyword>
<proteinExistence type="inferred from homology"/>
<evidence type="ECO:0000250" key="1">
    <source>
        <dbReference type="UniProtKB" id="O43309"/>
    </source>
</evidence>
<evidence type="ECO:0000255" key="2">
    <source>
        <dbReference type="PROSITE-ProRule" id="PRU00042"/>
    </source>
</evidence>
<evidence type="ECO:0000255" key="3">
    <source>
        <dbReference type="PROSITE-ProRule" id="PRU00187"/>
    </source>
</evidence>
<evidence type="ECO:0000256" key="4">
    <source>
        <dbReference type="SAM" id="MobiDB-lite"/>
    </source>
</evidence>
<evidence type="ECO:0000305" key="5"/>
<dbReference type="EMBL" id="DQ977463">
    <property type="protein sequence ID" value="ABM89232.1"/>
    <property type="molecule type" value="Genomic_DNA"/>
</dbReference>
<dbReference type="SMR" id="A2T7F4"/>
<dbReference type="GO" id="GO:0005634">
    <property type="term" value="C:nucleus"/>
    <property type="evidence" value="ECO:0007669"/>
    <property type="project" value="UniProtKB-SubCell"/>
</dbReference>
<dbReference type="GO" id="GO:0000981">
    <property type="term" value="F:DNA-binding transcription factor activity, RNA polymerase II-specific"/>
    <property type="evidence" value="ECO:0007669"/>
    <property type="project" value="TreeGrafter"/>
</dbReference>
<dbReference type="GO" id="GO:0000978">
    <property type="term" value="F:RNA polymerase II cis-regulatory region sequence-specific DNA binding"/>
    <property type="evidence" value="ECO:0007669"/>
    <property type="project" value="TreeGrafter"/>
</dbReference>
<dbReference type="GO" id="GO:0008270">
    <property type="term" value="F:zinc ion binding"/>
    <property type="evidence" value="ECO:0007669"/>
    <property type="project" value="UniProtKB-KW"/>
</dbReference>
<dbReference type="CDD" id="cd07936">
    <property type="entry name" value="SCAN"/>
    <property type="match status" value="1"/>
</dbReference>
<dbReference type="FunFam" id="3.30.160.60:FF:000056">
    <property type="entry name" value="Zinc finger and SCAN domain-containing 20"/>
    <property type="match status" value="1"/>
</dbReference>
<dbReference type="FunFam" id="3.30.160.60:FF:001087">
    <property type="entry name" value="Zinc finger and SCAN domain-containing protein 26"/>
    <property type="match status" value="1"/>
</dbReference>
<dbReference type="FunFam" id="3.30.160.60:FF:000144">
    <property type="entry name" value="zinc finger protein 181 isoform X1"/>
    <property type="match status" value="1"/>
</dbReference>
<dbReference type="FunFam" id="1.10.4020.10:FF:000001">
    <property type="entry name" value="zinc finger protein 263 isoform X1"/>
    <property type="match status" value="1"/>
</dbReference>
<dbReference type="FunFam" id="3.30.160.60:FF:000970">
    <property type="entry name" value="zinc finger protein 333 isoform X2"/>
    <property type="match status" value="1"/>
</dbReference>
<dbReference type="FunFam" id="3.30.160.60:FF:002343">
    <property type="entry name" value="Zinc finger protein 33A"/>
    <property type="match status" value="2"/>
</dbReference>
<dbReference type="FunFam" id="3.30.160.60:FF:000016">
    <property type="entry name" value="zinc finger protein 37 homolog"/>
    <property type="match status" value="1"/>
</dbReference>
<dbReference type="FunFam" id="3.30.160.60:FF:000070">
    <property type="entry name" value="zinc finger protein 689 isoform X1"/>
    <property type="match status" value="1"/>
</dbReference>
<dbReference type="FunFam" id="3.30.160.60:FF:000176">
    <property type="entry name" value="zinc finger protein 70"/>
    <property type="match status" value="1"/>
</dbReference>
<dbReference type="FunFam" id="3.30.160.60:FF:000229">
    <property type="entry name" value="Zinc finger protein 90 homolog"/>
    <property type="match status" value="1"/>
</dbReference>
<dbReference type="FunFam" id="3.30.160.60:FF:000330">
    <property type="entry name" value="Zinc finger with KRAB and SCAN domains 1"/>
    <property type="match status" value="1"/>
</dbReference>
<dbReference type="Gene3D" id="3.30.160.60">
    <property type="entry name" value="Classic Zinc Finger"/>
    <property type="match status" value="11"/>
</dbReference>
<dbReference type="Gene3D" id="1.10.4020.10">
    <property type="entry name" value="DNA breaking-rejoining enzymes"/>
    <property type="match status" value="1"/>
</dbReference>
<dbReference type="InterPro" id="IPR003309">
    <property type="entry name" value="SCAN_dom"/>
</dbReference>
<dbReference type="InterPro" id="IPR038269">
    <property type="entry name" value="SCAN_sf"/>
</dbReference>
<dbReference type="InterPro" id="IPR036236">
    <property type="entry name" value="Znf_C2H2_sf"/>
</dbReference>
<dbReference type="InterPro" id="IPR013087">
    <property type="entry name" value="Znf_C2H2_type"/>
</dbReference>
<dbReference type="PANTHER" id="PTHR23226">
    <property type="entry name" value="ZINC FINGER AND SCAN DOMAIN-CONTAINING"/>
    <property type="match status" value="1"/>
</dbReference>
<dbReference type="PANTHER" id="PTHR23226:SF76">
    <property type="entry name" value="ZINC FINGER AND SCAN DOMAIN-CONTAINING PROTEIN 23"/>
    <property type="match status" value="1"/>
</dbReference>
<dbReference type="Pfam" id="PF02023">
    <property type="entry name" value="SCAN"/>
    <property type="match status" value="1"/>
</dbReference>
<dbReference type="Pfam" id="PF00096">
    <property type="entry name" value="zf-C2H2"/>
    <property type="match status" value="10"/>
</dbReference>
<dbReference type="SMART" id="SM00431">
    <property type="entry name" value="SCAN"/>
    <property type="match status" value="1"/>
</dbReference>
<dbReference type="SMART" id="SM00355">
    <property type="entry name" value="ZnF_C2H2"/>
    <property type="match status" value="10"/>
</dbReference>
<dbReference type="SUPFAM" id="SSF57667">
    <property type="entry name" value="beta-beta-alpha zinc fingers"/>
    <property type="match status" value="6"/>
</dbReference>
<dbReference type="SUPFAM" id="SSF47353">
    <property type="entry name" value="Retrovirus capsid dimerization domain-like"/>
    <property type="match status" value="1"/>
</dbReference>
<dbReference type="PROSITE" id="PS50804">
    <property type="entry name" value="SCAN_BOX"/>
    <property type="match status" value="1"/>
</dbReference>
<dbReference type="PROSITE" id="PS00028">
    <property type="entry name" value="ZINC_FINGER_C2H2_1"/>
    <property type="match status" value="9"/>
</dbReference>
<dbReference type="PROSITE" id="PS50157">
    <property type="entry name" value="ZINC_FINGER_C2H2_2"/>
    <property type="match status" value="11"/>
</dbReference>
<gene>
    <name type="primary">ZSCAN12</name>
    <name type="synonym">ZNF96</name>
</gene>
<organism>
    <name type="scientific">Pongo pygmaeus</name>
    <name type="common">Bornean orangutan</name>
    <dbReference type="NCBI Taxonomy" id="9600"/>
    <lineage>
        <taxon>Eukaryota</taxon>
        <taxon>Metazoa</taxon>
        <taxon>Chordata</taxon>
        <taxon>Craniata</taxon>
        <taxon>Vertebrata</taxon>
        <taxon>Euteleostomi</taxon>
        <taxon>Mammalia</taxon>
        <taxon>Eutheria</taxon>
        <taxon>Euarchontoglires</taxon>
        <taxon>Primates</taxon>
        <taxon>Haplorrhini</taxon>
        <taxon>Catarrhini</taxon>
        <taxon>Hominidae</taxon>
        <taxon>Pongo</taxon>
    </lineage>
</organism>
<protein>
    <recommendedName>
        <fullName>Zinc finger and SCAN domain-containing protein 12</fullName>
    </recommendedName>
    <alternativeName>
        <fullName>Zinc finger protein 96</fullName>
    </alternativeName>
</protein>
<accession>A2T7F4</accession>
<sequence>MASTWAIQAHMDQDEPLEVKIEEEKYTTRQDWDLRKNNTHSREVFRQYFRQFCYQETSGPREALSRLRELCHQWLRPETHTKEQILELLVLEQFLTILPEELQAWVQEQHPESGEEVVTVLEDLERELDEPGEQVSAHTGEQEMFLQEMVPLGKEGEPSMSLQSMKAQPKYESPELESQQEQVLDVETGNEYGNLKQEVSEEMEPHGNTSSKFENDMSKSARCGETHKPEEITEEPSACSREDKQPTCDENGVSLTENSDHTEHQRICPGEKSYGCDDCGKAFSQHSHLIEHQRIHTGDRPYKCEECGKAFRGRTVLIRHKIIHTGEKPYKCNECGKAFGRWSALNQHQRLHTGEKHYHCNDCGKAFSQKAGLFHHIKIHKRDKPYQCTQCNKSFSRRSILTQHQGVHTGAKPYECNECGKAFVYNSSLVSHQEIHHKEKCYQCKECGKSFSQSGLIQHQRIHTGEKPYKCEVCEKAFIQRTSLTEHQRIHTGERPYKCDKCGKAFTQRSVLTEHQRIHTGERPYKCDECGNAFRGITSLIQHQRIHTGEKPYQCDECGKAFRQRRKTSYKEILLKNHSEPQAGVNLLLSSLIPEWQSCCRKDL</sequence>
<reference key="1">
    <citation type="submission" date="2006-08" db="EMBL/GenBank/DDBJ databases">
        <title>Positive selection in transcription factor genes on the human lineage.</title>
        <authorList>
            <person name="Nickel G.C."/>
            <person name="Tefft D.L."/>
            <person name="Trevarthen K."/>
            <person name="Funt J."/>
            <person name="Adams M.D."/>
        </authorList>
    </citation>
    <scope>NUCLEOTIDE SEQUENCE [GENOMIC DNA]</scope>
</reference>